<accession>P68880</accession>
<accession>P15680</accession>
<protein>
    <recommendedName>
        <fullName evidence="1">Nucleoprotein</fullName>
    </recommendedName>
    <alternativeName>
        <fullName evidence="1">Nucleocapsid protein</fullName>
        <shortName evidence="1">Protein N</shortName>
    </alternativeName>
</protein>
<feature type="chain" id="PRO_0000079038" description="Nucleoprotein">
    <location>
        <begin position="1"/>
        <end position="498"/>
    </location>
</feature>
<feature type="region of interest" description="Disordered" evidence="2">
    <location>
        <begin position="1"/>
        <end position="21"/>
    </location>
</feature>
<feature type="short sequence motif" description="Unconventional nuclear localization signal" evidence="1">
    <location>
        <begin position="1"/>
        <end position="18"/>
    </location>
</feature>
<feature type="short sequence motif" description="Bipartite nuclear localization signal" evidence="1">
    <location>
        <begin position="198"/>
        <end position="216"/>
    </location>
</feature>
<keyword id="KW-0167">Capsid protein</keyword>
<keyword id="KW-1139">Helical capsid protein</keyword>
<keyword id="KW-1048">Host nucleus</keyword>
<keyword id="KW-0945">Host-virus interaction</keyword>
<keyword id="KW-0687">Ribonucleoprotein</keyword>
<keyword id="KW-0694">RNA-binding</keyword>
<keyword id="KW-0543">Viral nucleoprotein</keyword>
<keyword id="KW-1163">Viral penetration into host nucleus</keyword>
<keyword id="KW-0946">Virion</keyword>
<keyword id="KW-1160">Virus entry into host cell</keyword>
<reference key="1">
    <citation type="journal article" date="1991" name="J. Virol.">
        <title>Evolution of influenza A virus nucleoprotein genes: implications for the origins of H1N1 human and classical swine viruses.</title>
        <authorList>
            <person name="Gorman O.T."/>
            <person name="Bean W.J."/>
            <person name="Kawaoka Y."/>
            <person name="Donatelli I."/>
            <person name="Guo Y."/>
            <person name="Webster R.G."/>
        </authorList>
    </citation>
    <scope>NUCLEOTIDE SEQUENCE [GENOMIC RNA]</scope>
</reference>
<proteinExistence type="inferred from homology"/>
<dbReference type="EMBL" id="M63776">
    <property type="protein sequence ID" value="AAA52237.1"/>
    <property type="molecule type" value="Genomic_RNA"/>
</dbReference>
<dbReference type="SMR" id="P68880"/>
<dbReference type="GO" id="GO:0019029">
    <property type="term" value="C:helical viral capsid"/>
    <property type="evidence" value="ECO:0007669"/>
    <property type="project" value="UniProtKB-UniRule"/>
</dbReference>
<dbReference type="GO" id="GO:0043657">
    <property type="term" value="C:host cell"/>
    <property type="evidence" value="ECO:0007669"/>
    <property type="project" value="GOC"/>
</dbReference>
<dbReference type="GO" id="GO:0042025">
    <property type="term" value="C:host cell nucleus"/>
    <property type="evidence" value="ECO:0007669"/>
    <property type="project" value="UniProtKB-SubCell"/>
</dbReference>
<dbReference type="GO" id="GO:1990904">
    <property type="term" value="C:ribonucleoprotein complex"/>
    <property type="evidence" value="ECO:0007669"/>
    <property type="project" value="UniProtKB-KW"/>
</dbReference>
<dbReference type="GO" id="GO:0019013">
    <property type="term" value="C:viral nucleocapsid"/>
    <property type="evidence" value="ECO:0007669"/>
    <property type="project" value="UniProtKB-UniRule"/>
</dbReference>
<dbReference type="GO" id="GO:0003723">
    <property type="term" value="F:RNA binding"/>
    <property type="evidence" value="ECO:0007669"/>
    <property type="project" value="UniProtKB-UniRule"/>
</dbReference>
<dbReference type="GO" id="GO:0005198">
    <property type="term" value="F:structural molecule activity"/>
    <property type="evidence" value="ECO:0007669"/>
    <property type="project" value="UniProtKB-UniRule"/>
</dbReference>
<dbReference type="GO" id="GO:0046718">
    <property type="term" value="P:symbiont entry into host cell"/>
    <property type="evidence" value="ECO:0007669"/>
    <property type="project" value="UniProtKB-KW"/>
</dbReference>
<dbReference type="GO" id="GO:0075732">
    <property type="term" value="P:viral penetration into host nucleus"/>
    <property type="evidence" value="ECO:0007669"/>
    <property type="project" value="UniProtKB-UniRule"/>
</dbReference>
<dbReference type="HAMAP" id="MF_04070">
    <property type="entry name" value="INFV_NCAP"/>
    <property type="match status" value="1"/>
</dbReference>
<dbReference type="InterPro" id="IPR002141">
    <property type="entry name" value="Flu_NP"/>
</dbReference>
<dbReference type="Pfam" id="PF00506">
    <property type="entry name" value="Flu_NP"/>
    <property type="match status" value="1"/>
</dbReference>
<dbReference type="SUPFAM" id="SSF161003">
    <property type="entry name" value="flu NP-like"/>
    <property type="match status" value="1"/>
</dbReference>
<evidence type="ECO:0000255" key="1">
    <source>
        <dbReference type="HAMAP-Rule" id="MF_04070"/>
    </source>
</evidence>
<evidence type="ECO:0000256" key="2">
    <source>
        <dbReference type="SAM" id="MobiDB-lite"/>
    </source>
</evidence>
<comment type="function">
    <text evidence="1">Encapsidates the negative strand viral RNA, protecting it from nucleases. The encapsidated genomic RNA is termed the ribonucleoprotein (RNP) and serves as template for transcription and replication. The RNP needs to be localized in the host nucleus to start an infectious cycle, but is too large to diffuse through the nuclear pore complex. NP comprises at least 2 nuclear localization signals that are responsible for the active RNP import into the nucleus through cellular importin alpha/beta pathway. Later in the infection, nclear export of RNPs are mediated through viral proteins NEP interacting with M1 which binds nucleoproteins. It is possible that nucleoprotein binds directly host exportin-1/XPO1 and plays an active role in RNPs nuclear export. M1 interaction with RNP seems to hide nucleoprotein's nuclear localization signals. Soon after a virion infects a new cell, M1 dissociates from the RNP under acidification of the virion driven by M2 protein. Dissociation of M1 from RNP unmasks nucleoprotein's nuclear localization signals, targeting the RNP to the nucleus.</text>
</comment>
<comment type="subunit">
    <text evidence="1">Homomultimerizes to form the nucleocapsid. May bind host exportin-1/XPO1. Binds to viral genomic RNA. Protein-RNA contacts are mediated by a combination of electrostatic interactions between positively charged residues and the phosphate backbone and planar interactions between aromatic side chains and bases.</text>
</comment>
<comment type="subcellular location">
    <subcellularLocation>
        <location evidence="1">Virion</location>
    </subcellularLocation>
    <subcellularLocation>
        <location evidence="1">Host nucleus</location>
    </subcellularLocation>
</comment>
<comment type="PTM">
    <text evidence="1">Late in virus-infected cells, may be cleaved from a 56-kDa protein to a 53-kDa protein by a cellular caspase. This cleavage might be a marker for the onset of apoptosis in infected cells or have a specific function in virus host interaction.</text>
</comment>
<comment type="similarity">
    <text evidence="1">Belongs to the influenza viruses nucleoprotein family.</text>
</comment>
<sequence length="498" mass="56279">MASQGTKRSYEQMETGGERQNATEIRASVGRMVGGIGRFYIQMCTELKLSDYEGRLIQNSITIERMVLSAFDERRNKYLEEHPSAGKDPKKTGGPIYRRRDGKWVRELILYDKEEIRRIWRQANNGEDATAGLTHLMIWHSNLNDATYQRTRALVRTGMDPRMCSLMQGSTLPRRSGAAGAAVKGVGTMVMELIRMIKRGINDRNFWRGENGRRTRIAYERMCNILKGKFQTAAQRAMMDQVRESRNPGNAEIEDLIFLARSALILRGSVAHKSCLPACVYGLAVASGYDFEREGYSLVGIDPFRLLQNSQVFSLIRPNENPAHKSQLVWMACHSAAFEDLRVSSFIRGTRVVPRGQLSTRGVQIASNENMETMDSSTLELRSRYWAIRTRSGGNTNQQRASAGQISVQPTFSVQRNLPFERATIMAAFTGNTEGRTSDMRTEIIRMMENARPEDVSFQGRGVFELSDEKATNPIVPSFDMSNEGSYFFGDNAEEYDN</sequence>
<gene>
    <name evidence="1" type="primary">NP</name>
</gene>
<name>NCAP_I74A2</name>
<organism>
    <name type="scientific">Influenza A virus (strain A/Duck/Memphis/928/1974 H3N8)</name>
    <dbReference type="NCBI Taxonomy" id="383553"/>
    <lineage>
        <taxon>Viruses</taxon>
        <taxon>Riboviria</taxon>
        <taxon>Orthornavirae</taxon>
        <taxon>Negarnaviricota</taxon>
        <taxon>Polyploviricotina</taxon>
        <taxon>Insthoviricetes</taxon>
        <taxon>Articulavirales</taxon>
        <taxon>Orthomyxoviridae</taxon>
        <taxon>Alphainfluenzavirus</taxon>
        <taxon>Alphainfluenzavirus influenzae</taxon>
        <taxon>Influenza A virus</taxon>
    </lineage>
</organism>
<organismHost>
    <name type="scientific">Aves</name>
    <dbReference type="NCBI Taxonomy" id="8782"/>
</organismHost>
<organismHost>
    <name type="scientific">Equus caballus</name>
    <name type="common">Horse</name>
    <dbReference type="NCBI Taxonomy" id="9796"/>
</organismHost>